<name>NMDE2_XENLA</name>
<proteinExistence type="evidence at protein level"/>
<evidence type="ECO:0000250" key="1">
    <source>
        <dbReference type="UniProtKB" id="P35438"/>
    </source>
</evidence>
<evidence type="ECO:0000250" key="2">
    <source>
        <dbReference type="UniProtKB" id="Q00959"/>
    </source>
</evidence>
<evidence type="ECO:0000250" key="3">
    <source>
        <dbReference type="UniProtKB" id="Q00960"/>
    </source>
</evidence>
<evidence type="ECO:0000250" key="4">
    <source>
        <dbReference type="UniProtKB" id="Q13224"/>
    </source>
</evidence>
<evidence type="ECO:0000255" key="5"/>
<evidence type="ECO:0000256" key="6">
    <source>
        <dbReference type="SAM" id="MobiDB-lite"/>
    </source>
</evidence>
<evidence type="ECO:0000269" key="7">
    <source>
    </source>
</evidence>
<evidence type="ECO:0000269" key="8">
    <source>
    </source>
</evidence>
<evidence type="ECO:0000269" key="9">
    <source>
    </source>
</evidence>
<evidence type="ECO:0000269" key="10">
    <source>
    </source>
</evidence>
<evidence type="ECO:0000303" key="11">
    <source>
    </source>
</evidence>
<evidence type="ECO:0000305" key="12"/>
<evidence type="ECO:0000305" key="13">
    <source>
    </source>
</evidence>
<evidence type="ECO:0000305" key="14">
    <source>
    </source>
</evidence>
<evidence type="ECO:0000312" key="15">
    <source>
        <dbReference type="EMBL" id="ABU84989.1"/>
    </source>
</evidence>
<evidence type="ECO:0000312" key="16">
    <source>
        <dbReference type="Proteomes" id="UP000186698"/>
    </source>
</evidence>
<evidence type="ECO:0007744" key="17">
    <source>
        <dbReference type="PDB" id="4TLL"/>
    </source>
</evidence>
<evidence type="ECO:0007744" key="18">
    <source>
        <dbReference type="PDB" id="4TLM"/>
    </source>
</evidence>
<evidence type="ECO:0007744" key="19">
    <source>
        <dbReference type="PDB" id="5IOU"/>
    </source>
</evidence>
<evidence type="ECO:0007744" key="20">
    <source>
        <dbReference type="PDB" id="5IOV"/>
    </source>
</evidence>
<evidence type="ECO:0007744" key="21">
    <source>
        <dbReference type="PDB" id="5IPQ"/>
    </source>
</evidence>
<evidence type="ECO:0007744" key="22">
    <source>
        <dbReference type="PDB" id="5UOW"/>
    </source>
</evidence>
<evidence type="ECO:0007744" key="23">
    <source>
        <dbReference type="PDB" id="5UP2"/>
    </source>
</evidence>
<sequence length="1448" mass="163913">MRPTEACCYLKISLIILFYMGCYAQKHPNMDIAVILVGTTEEVAIKDVHEKDDFHHLPVTPRVALVTMNESDPKSIITRICDLMSDKKVQGVVFGDDTDQEAIAQILDFISVQTLTPILGIHGGSSMIMADKEEASMFFQFGPSIEQQASVMLNIMEEYDWYIFSIVTTYFPGYQDFENKVRSTIENSFVGWELEEVIHLDMSLDDIDSKIQNQLKKLQSPVILLYCTKEEATYIFEVAHSVGLTGYGFTWIVPSLVAGDTDTVPDEFPTGLISVSYDEWDYDLPARVRDGIAIITTAASTMLSEHNSIPQSKSSCNNIQESRVYEAHMLKRYLINVTFEGRNLSFSEDGYQMHPKLVIILLNQERKWERVGKYKDRSLKMKYYVWPVFDLYPNSEEHKDEHLSIVTLEEAPFVIVEDVDPLSGTCMRNTVPCRKQIRPENRTEEGGNYIKRCCKGFCIDILKKIAKTVKFTYDLYLVTNGKHGKKINGTWNGMIGEVVTKRAYMAVGSLTINEERSEVVDFSVPFIETGISVMVSRSNGTVSPSAFLEPFSADVWVMMFVMLLIVSAVAVFVFEYFSPVGYNRCLADGREPGGPSFTIGKAIWLLWGLVFNNSVPVQNPKGTTSKIMVSVWAFFAVIFLASYTANLAAFMIQEEYVDQVSGLSDKKFQRPNDFSPAFRFGTVPNGSTERNIRNNYLEMHSYMVKFNQRSVQDALLSLKSGKLDAFIYDAAVLNYMAGRDEGCKLVTIGSGKVFATTGYGIAIQKDSGWKRQVDLAILQLFGDGEMEELEALWLTGICHNEKNEVMSSQLDIDNMAGVFYMLAAAMALSLITFIMEHLFFWQLRHCFMGVCSGKPGMVFSISRGIYSCIHGVAIEDRQSALDSPSATMNNTHSNILRLLRTAKNMANLSGVNGSPQSALDFIRRESSVYDISEHRRSFTHSDCKSFQPEENLFSDYISEVERTFGNLQLKDSNVYQDHFHHHRPHSIGSNSSIDGLYDCDNAPFTTQPRSLSKKPLDIGLPSKHPSPQIGDLYGKFSFKSDHYGAPDDLIRSDVSDISTHTVTYGNIEGNAKRRKQYKDSLKKRPASAKSRREFDEIELAYRRRQRSPDHKRYFRDKEGLRDFYLDQFRTKENNPHWEHVDLTHIYAERADDFKHDTSCSNRQHQKHVGEFVQTDRKHGSGGNAWEKNMSNIEWEDRASSNFCRNCPSKMHNYTGQNTNRPACIRCEVCKKAGNLYDISEDNSLQDLEARPIQAPNSKYPQSPNGKAQKRNRSKLHRQHSYDTFVDLQKEDVTLAPRSVSLKDKERFLDGSPYAHMFEMPNETSFTSKSHGPTHNPGGYMLSRSLYPDRVTQNPFIPTFGDDQCLLHGSKPYYFRQPAIGGLKGRADFRGAGKSLSAQHSGPSGHFQKDICIGNQPNACVSNNKNPRSFNNSTNGHVYEKLSSIESDV</sequence>
<keyword id="KW-0002">3D-structure</keyword>
<keyword id="KW-0106">Calcium</keyword>
<keyword id="KW-1003">Cell membrane</keyword>
<keyword id="KW-1015">Disulfide bond</keyword>
<keyword id="KW-0325">Glycoprotein</keyword>
<keyword id="KW-0407">Ion channel</keyword>
<keyword id="KW-0406">Ion transport</keyword>
<keyword id="KW-1071">Ligand-gated ion channel</keyword>
<keyword id="KW-0460">Magnesium</keyword>
<keyword id="KW-0472">Membrane</keyword>
<keyword id="KW-0479">Metal-binding</keyword>
<keyword id="KW-0628">Postsynaptic cell membrane</keyword>
<keyword id="KW-0675">Receptor</keyword>
<keyword id="KW-1185">Reference proteome</keyword>
<keyword id="KW-0732">Signal</keyword>
<keyword id="KW-0770">Synapse</keyword>
<keyword id="KW-0812">Transmembrane</keyword>
<keyword id="KW-1133">Transmembrane helix</keyword>
<keyword id="KW-0813">Transport</keyword>
<keyword id="KW-0862">Zinc</keyword>
<comment type="function">
    <text evidence="4 7 8 10">Component of N-methyl-D-aspartate (NMDA) receptors (NMDARs) that function as heterotetrameric, ligand-gated cation channels with high calcium permeability and voltage-dependent block by Mg(2+) (PubMed:18177891, PubMed:25008524, PubMed:28232581). Channel activation requires binding of the neurotransmitter L-glutamate to the GluN2 subunit, glycine binding to the GluN1 subunit, plus membrane depolarization to eliminate channel inhibition by Mg(2+) (PubMed:18177891, PubMed:25008524, PubMed:28232581). NMDARs mediate simultaneously the potasium efflux and the influx of calcium and sodium (By similarity). Each GluN2 subunit confers differential attributes to channel properties, including activation, deactivation and desensitization kinetics, pH sensitivity, Ca2(+) permeability, and binding to allosteric modulators (By similarity).</text>
</comment>
<comment type="catalytic activity">
    <reaction evidence="7 8 10">
        <text>Ca(2+)(in) = Ca(2+)(out)</text>
        <dbReference type="Rhea" id="RHEA:29671"/>
        <dbReference type="ChEBI" id="CHEBI:29108"/>
    </reaction>
</comment>
<comment type="catalytic activity">
    <reaction evidence="4">
        <text>Na(+)(in) = Na(+)(out)</text>
        <dbReference type="Rhea" id="RHEA:34963"/>
        <dbReference type="ChEBI" id="CHEBI:29101"/>
    </reaction>
</comment>
<comment type="catalytic activity">
    <reaction evidence="1">
        <text>K(+)(in) = K(+)(out)</text>
        <dbReference type="Rhea" id="RHEA:29463"/>
        <dbReference type="ChEBI" id="CHEBI:29103"/>
    </reaction>
</comment>
<comment type="subunit">
    <text evidence="7 8 9 10 12">Heterotetramer. Forms heterotetrameric channels composed of two GluN1/zeta subunits (GRIN1), and two identical GluN2/epsilon subunits (GRIN2A, GRIN2B, GRIN2C or GRIN2D) or GluN3 subunits (GRIN3A or GRIN3B) (in vitro) (PubMed:18177891, PubMed:25008524, PubMed:27062927, PubMed:28232581). In vivo, the subunit composition may depend on the expression levels of the different subunits (Probable).</text>
</comment>
<comment type="interaction">
    <interactant intactId="EBI-16113306">
        <id>A7XY94</id>
    </interactant>
    <interactant intactId="EBI-15932423">
        <id>A0A1L8F5J9</id>
        <label>grin1</label>
    </interactant>
    <organismsDiffer>false</organismsDiffer>
    <experiments>3</experiments>
</comment>
<comment type="subcellular location">
    <subcellularLocation>
        <location evidence="7 8 10">Cell membrane</location>
        <topology evidence="8 10">Multi-pass membrane protein</topology>
    </subcellularLocation>
    <subcellularLocation>
        <location evidence="3">Postsynaptic cell membrane</location>
        <topology evidence="8 10">Multi-pass membrane protein</topology>
    </subcellularLocation>
</comment>
<comment type="tissue specificity">
    <text evidence="7">Detected in oocytes.</text>
</comment>
<comment type="domain">
    <text evidence="13 14">A hydrophobic region that gives rise to the prediction of a transmembrane span does not cross the membrane, but is part of a discontinuously helical region that dips into the membrane and is probably part of the pore and of the selectivity filter.</text>
</comment>
<comment type="domain">
    <text evidence="3">The extracellular N-terminal domain (ATD/NTD) endows NMDARs with a unique capacity for allosteric modulation, harboring several binding sites for small molecule ligands that act as subunit-specific allosteric modulators of ion channel activity.</text>
</comment>
<comment type="similarity">
    <text evidence="12">Belongs to the glutamate-gated ion channel (TC 1.A.10.1) family. NR2B/GRIN2B subfamily.</text>
</comment>
<protein>
    <recommendedName>
        <fullName evidence="4">Glutamate receptor ionotropic, NMDA 2B</fullName>
        <shortName evidence="4">GluN2B</shortName>
    </recommendedName>
    <alternativeName>
        <fullName>N-methyl D-aspartate receptor subtype 2B</fullName>
        <shortName evidence="4">NMDAR2B</shortName>
        <shortName evidence="11">NR2B</shortName>
    </alternativeName>
</protein>
<gene>
    <name evidence="4" type="primary">grin2b</name>
</gene>
<feature type="signal peptide" evidence="5">
    <location>
        <begin position="1"/>
        <end position="24"/>
    </location>
</feature>
<feature type="chain" id="PRO_5010821104" description="Glutamate receptor ionotropic, NMDA 2B" evidence="5">
    <location>
        <begin position="25"/>
        <end position="1448"/>
    </location>
</feature>
<feature type="topological domain" description="Extracellular" evidence="8">
    <location>
        <begin position="25"/>
        <end position="554"/>
    </location>
</feature>
<feature type="transmembrane region" description="Helical" evidence="8">
    <location>
        <begin position="555"/>
        <end position="573"/>
    </location>
</feature>
<feature type="topological domain" description="Cytoplasmic" evidence="8">
    <location>
        <begin position="574"/>
        <end position="600"/>
    </location>
</feature>
<feature type="intramembrane region" description="Discontinuously helical" evidence="8">
    <location>
        <begin position="601"/>
        <end position="620"/>
    </location>
</feature>
<feature type="topological domain" description="Cytoplasmic" evidence="8">
    <location>
        <begin position="621"/>
        <end position="627"/>
    </location>
</feature>
<feature type="transmembrane region" description="Helical" evidence="8">
    <location>
        <begin position="628"/>
        <end position="643"/>
    </location>
</feature>
<feature type="topological domain" description="Extracellular" evidence="8">
    <location>
        <begin position="644"/>
        <end position="819"/>
    </location>
</feature>
<feature type="transmembrane region" description="Helical" evidence="3">
    <location>
        <begin position="820"/>
        <end position="839"/>
    </location>
</feature>
<feature type="topological domain" description="Cytoplasmic" evidence="8">
    <location>
        <begin position="840"/>
        <end position="1448"/>
    </location>
</feature>
<feature type="region of interest" description="Pore-forming" evidence="13">
    <location>
        <begin position="601"/>
        <end position="620"/>
    </location>
</feature>
<feature type="region of interest" description="Disordered" evidence="6">
    <location>
        <begin position="1254"/>
        <end position="1277"/>
    </location>
</feature>
<feature type="compositionally biased region" description="Polar residues" evidence="6">
    <location>
        <begin position="1254"/>
        <end position="1265"/>
    </location>
</feature>
<feature type="compositionally biased region" description="Basic residues" evidence="6">
    <location>
        <begin position="1267"/>
        <end position="1277"/>
    </location>
</feature>
<feature type="binding site" evidence="3">
    <location>
        <position position="122"/>
    </location>
    <ligand>
        <name>Zn(2+)</name>
        <dbReference type="ChEBI" id="CHEBI:29105"/>
        <label>1</label>
        <note>inhibitor</note>
    </ligand>
</feature>
<feature type="binding site" evidence="3">
    <location>
        <position position="279"/>
    </location>
    <ligand>
        <name>Zn(2+)</name>
        <dbReference type="ChEBI" id="CHEBI:29105"/>
        <label>1</label>
        <note>inhibitor</note>
    </ligand>
</feature>
<feature type="binding site" evidence="13">
    <location>
        <position position="511"/>
    </location>
    <ligand>
        <name>L-glutamate</name>
        <dbReference type="ChEBI" id="CHEBI:29985"/>
    </ligand>
</feature>
<feature type="binding site" evidence="3">
    <location>
        <position position="516"/>
    </location>
    <ligand>
        <name>L-glutamate</name>
        <dbReference type="ChEBI" id="CHEBI:29985"/>
    </ligand>
</feature>
<feature type="binding site" evidence="2">
    <location>
        <begin position="687"/>
        <end position="688"/>
    </location>
    <ligand>
        <name>L-glutamate</name>
        <dbReference type="ChEBI" id="CHEBI:29985"/>
    </ligand>
</feature>
<feature type="binding site" evidence="3">
    <location>
        <position position="729"/>
    </location>
    <ligand>
        <name>L-glutamate</name>
        <dbReference type="ChEBI" id="CHEBI:29985"/>
    </ligand>
</feature>
<feature type="glycosylation site" description="N-linked (GlcNAc...) asparagine" evidence="8 10 17 22 23">
    <location>
        <position position="336"/>
    </location>
</feature>
<feature type="glycosylation site" description="N-linked (GlcNAc...) asparagine" evidence="8 10 18 22 23">
    <location>
        <position position="685"/>
    </location>
</feature>
<feature type="disulfide bond" evidence="8 10 17 18 22">
    <location>
        <begin position="81"/>
        <end position="316"/>
    </location>
</feature>
<feature type="disulfide bond" evidence="8 10 17 18 22">
    <location>
        <begin position="426"/>
        <end position="453"/>
    </location>
</feature>
<feature type="disulfide bond" evidence="8 10 17 18 22">
    <location>
        <begin position="433"/>
        <end position="454"/>
    </location>
</feature>
<feature type="disulfide bond" evidence="8 10 17 18 22">
    <location>
        <begin position="743"/>
        <end position="798"/>
    </location>
</feature>
<dbReference type="EMBL" id="EU104357">
    <property type="protein sequence ID" value="ABU84989.1"/>
    <property type="molecule type" value="mRNA"/>
</dbReference>
<dbReference type="EMBL" id="CM004473">
    <property type="protein sequence ID" value="OCT82994.1"/>
    <property type="molecule type" value="Genomic_DNA"/>
</dbReference>
<dbReference type="RefSeq" id="NP_001104191.1">
    <property type="nucleotide sequence ID" value="NM_001110721.1"/>
</dbReference>
<dbReference type="RefSeq" id="XP_018114751.1">
    <property type="nucleotide sequence ID" value="XM_018259262.1"/>
</dbReference>
<dbReference type="PDB" id="4TLL">
    <property type="method" value="X-ray"/>
    <property type="resolution" value="3.59 A"/>
    <property type="chains" value="B/D=20-839"/>
</dbReference>
<dbReference type="PDB" id="4TLM">
    <property type="method" value="X-ray"/>
    <property type="resolution" value="3.77 A"/>
    <property type="chains" value="B/D=20-839"/>
</dbReference>
<dbReference type="PDB" id="5IOU">
    <property type="method" value="EM"/>
    <property type="resolution" value="7.00 A"/>
    <property type="chains" value="B/D=1-839"/>
</dbReference>
<dbReference type="PDB" id="5IOV">
    <property type="method" value="EM"/>
    <property type="resolution" value="7.50 A"/>
    <property type="chains" value="B/D=1-839"/>
</dbReference>
<dbReference type="PDB" id="5IPQ">
    <property type="method" value="EM"/>
    <property type="resolution" value="13.50 A"/>
    <property type="chains" value="B/D=1-839"/>
</dbReference>
<dbReference type="PDB" id="5IPR">
    <property type="method" value="EM"/>
    <property type="resolution" value="14.10 A"/>
    <property type="chains" value="B/D=1-839"/>
</dbReference>
<dbReference type="PDB" id="5IPS">
    <property type="method" value="EM"/>
    <property type="resolution" value="13.50 A"/>
    <property type="chains" value="B/D=1-839"/>
</dbReference>
<dbReference type="PDB" id="5IPT">
    <property type="method" value="EM"/>
    <property type="resolution" value="14.10 A"/>
    <property type="chains" value="B/D=1-839"/>
</dbReference>
<dbReference type="PDB" id="5IPU">
    <property type="method" value="EM"/>
    <property type="resolution" value="15.40 A"/>
    <property type="chains" value="B/D=1-839"/>
</dbReference>
<dbReference type="PDB" id="5IPV">
    <property type="method" value="EM"/>
    <property type="resolution" value="9.25 A"/>
    <property type="chains" value="B/D=1-839"/>
</dbReference>
<dbReference type="PDB" id="5UN1">
    <property type="method" value="X-ray"/>
    <property type="resolution" value="3.60 A"/>
    <property type="chains" value="B/D/F/H=400-839"/>
</dbReference>
<dbReference type="PDB" id="5UOW">
    <property type="method" value="EM"/>
    <property type="resolution" value="4.50 A"/>
    <property type="chains" value="D=1-840"/>
</dbReference>
<dbReference type="PDB" id="5UP2">
    <property type="method" value="EM"/>
    <property type="resolution" value="6.00 A"/>
    <property type="chains" value="D=1-840"/>
</dbReference>
<dbReference type="PDBsum" id="4TLL"/>
<dbReference type="PDBsum" id="4TLM"/>
<dbReference type="PDBsum" id="5IOU"/>
<dbReference type="PDBsum" id="5IOV"/>
<dbReference type="PDBsum" id="5IPQ"/>
<dbReference type="PDBsum" id="5IPR"/>
<dbReference type="PDBsum" id="5IPS"/>
<dbReference type="PDBsum" id="5IPT"/>
<dbReference type="PDBsum" id="5IPU"/>
<dbReference type="PDBsum" id="5IPV"/>
<dbReference type="PDBsum" id="5UN1"/>
<dbReference type="PDBsum" id="5UOW"/>
<dbReference type="PDBsum" id="5UP2"/>
<dbReference type="EMDB" id="EMD-8097"/>
<dbReference type="EMDB" id="EMD-8098"/>
<dbReference type="EMDB" id="EMD-8101"/>
<dbReference type="EMDB" id="EMD-8102"/>
<dbReference type="EMDB" id="EMD-8103"/>
<dbReference type="EMDB" id="EMD-8104"/>
<dbReference type="EMDB" id="EMD-8105"/>
<dbReference type="EMDB" id="EMD-8106"/>
<dbReference type="EMDB" id="EMD-8579"/>
<dbReference type="EMDB" id="EMD-8581"/>
<dbReference type="SMR" id="A7XY94"/>
<dbReference type="DIP" id="DIP-61037N"/>
<dbReference type="IntAct" id="A7XY94">
    <property type="interactions" value="1"/>
</dbReference>
<dbReference type="STRING" id="8355.A7XY94"/>
<dbReference type="GlyCosmos" id="A7XY94">
    <property type="glycosylation" value="2 sites, No reported glycans"/>
</dbReference>
<dbReference type="iPTMnet" id="A7XY94"/>
<dbReference type="PaxDb" id="8355-A7XY94"/>
<dbReference type="GeneID" id="100126610"/>
<dbReference type="KEGG" id="xla:100126610"/>
<dbReference type="CTD" id="100126610"/>
<dbReference type="OMA" id="MSNIEWE"/>
<dbReference type="OrthoDB" id="5984008at2759"/>
<dbReference type="EvolutionaryTrace" id="A7XY94"/>
<dbReference type="Proteomes" id="UP000186698">
    <property type="component" value="Chromosome 4S"/>
</dbReference>
<dbReference type="Proteomes" id="UP000694892">
    <property type="component" value="Chromosome 4S"/>
</dbReference>
<dbReference type="Bgee" id="100126610">
    <property type="expression patterns" value="Expressed in blastula and 5 other cell types or tissues"/>
</dbReference>
<dbReference type="GO" id="GO:0005770">
    <property type="term" value="C:late endosome"/>
    <property type="evidence" value="ECO:0000250"/>
    <property type="project" value="UniProtKB"/>
</dbReference>
<dbReference type="GO" id="GO:0005764">
    <property type="term" value="C:lysosome"/>
    <property type="evidence" value="ECO:0000250"/>
    <property type="project" value="UniProtKB"/>
</dbReference>
<dbReference type="GO" id="GO:0017146">
    <property type="term" value="C:NMDA selective glutamate receptor complex"/>
    <property type="evidence" value="ECO:0000314"/>
    <property type="project" value="UniProtKB"/>
</dbReference>
<dbReference type="GO" id="GO:0005886">
    <property type="term" value="C:plasma membrane"/>
    <property type="evidence" value="ECO:0000314"/>
    <property type="project" value="UniProtKB"/>
</dbReference>
<dbReference type="GO" id="GO:0098839">
    <property type="term" value="C:postsynaptic density membrane"/>
    <property type="evidence" value="ECO:0000318"/>
    <property type="project" value="GO_Central"/>
</dbReference>
<dbReference type="GO" id="GO:0045211">
    <property type="term" value="C:postsynaptic membrane"/>
    <property type="evidence" value="ECO:0000250"/>
    <property type="project" value="UniProtKB"/>
</dbReference>
<dbReference type="GO" id="GO:0046872">
    <property type="term" value="F:metal ion binding"/>
    <property type="evidence" value="ECO:0007669"/>
    <property type="project" value="UniProtKB-KW"/>
</dbReference>
<dbReference type="GO" id="GO:0004972">
    <property type="term" value="F:NMDA glutamate receptor activity"/>
    <property type="evidence" value="ECO:0000314"/>
    <property type="project" value="UniProtKB"/>
</dbReference>
<dbReference type="GO" id="GO:1904315">
    <property type="term" value="F:transmitter-gated monoatomic ion channel activity involved in regulation of postsynaptic membrane potential"/>
    <property type="evidence" value="ECO:0000318"/>
    <property type="project" value="GO_Central"/>
</dbReference>
<dbReference type="GO" id="GO:0060079">
    <property type="term" value="P:excitatory postsynaptic potential"/>
    <property type="evidence" value="ECO:0000318"/>
    <property type="project" value="GO_Central"/>
</dbReference>
<dbReference type="GO" id="GO:0060291">
    <property type="term" value="P:long-term synaptic potentiation"/>
    <property type="evidence" value="ECO:0000318"/>
    <property type="project" value="GO_Central"/>
</dbReference>
<dbReference type="GO" id="GO:0032026">
    <property type="term" value="P:response to magnesium ion"/>
    <property type="evidence" value="ECO:0000314"/>
    <property type="project" value="UniProtKB"/>
</dbReference>
<dbReference type="GO" id="GO:0010043">
    <property type="term" value="P:response to zinc ion"/>
    <property type="evidence" value="ECO:0000314"/>
    <property type="project" value="UniProtKB"/>
</dbReference>
<dbReference type="GO" id="GO:0035249">
    <property type="term" value="P:synaptic transmission, glutamatergic"/>
    <property type="evidence" value="ECO:0000318"/>
    <property type="project" value="GO_Central"/>
</dbReference>
<dbReference type="CDD" id="cd06378">
    <property type="entry name" value="PBP1_iGluR_NMDA_NR2"/>
    <property type="match status" value="1"/>
</dbReference>
<dbReference type="CDD" id="cd13718">
    <property type="entry name" value="PBP2_iGluR_NMDA_Nr2"/>
    <property type="match status" value="1"/>
</dbReference>
<dbReference type="FunFam" id="3.40.50.2300:FF:000312">
    <property type="entry name" value="Glutamate ionotropic receptor NMDA type subunit 2B"/>
    <property type="match status" value="1"/>
</dbReference>
<dbReference type="FunFam" id="1.10.287.70:FF:000199">
    <property type="entry name" value="Glutamate receptor ionotropic, NMDA 2B"/>
    <property type="match status" value="1"/>
</dbReference>
<dbReference type="FunFam" id="3.40.50.2300:FF:000020">
    <property type="entry name" value="Glutamate receptor ionotropic, NMDA 2B, putative"/>
    <property type="match status" value="1"/>
</dbReference>
<dbReference type="FunFam" id="3.40.190.10:FF:000007">
    <property type="entry name" value="Putative glutamate receptor ionotropic NMDA 2B"/>
    <property type="match status" value="1"/>
</dbReference>
<dbReference type="FunFam" id="3.40.190.10:FF:000038">
    <property type="entry name" value="Putative glutamate receptor ionotropic NMDA 2B"/>
    <property type="match status" value="1"/>
</dbReference>
<dbReference type="Gene3D" id="3.40.50.2300">
    <property type="match status" value="2"/>
</dbReference>
<dbReference type="Gene3D" id="3.40.190.10">
    <property type="entry name" value="Periplasmic binding protein-like II"/>
    <property type="match status" value="2"/>
</dbReference>
<dbReference type="InterPro" id="IPR001828">
    <property type="entry name" value="ANF_lig-bd_rcpt"/>
</dbReference>
<dbReference type="InterPro" id="IPR019594">
    <property type="entry name" value="Glu/Gly-bd"/>
</dbReference>
<dbReference type="InterPro" id="IPR001508">
    <property type="entry name" value="Iono_Glu_rcpt_met"/>
</dbReference>
<dbReference type="InterPro" id="IPR015683">
    <property type="entry name" value="Ionotropic_Glu_rcpt"/>
</dbReference>
<dbReference type="InterPro" id="IPR001320">
    <property type="entry name" value="Iontro_rcpt_C"/>
</dbReference>
<dbReference type="InterPro" id="IPR018884">
    <property type="entry name" value="NMDAR2_C"/>
</dbReference>
<dbReference type="InterPro" id="IPR028082">
    <property type="entry name" value="Peripla_BP_I"/>
</dbReference>
<dbReference type="PANTHER" id="PTHR18966">
    <property type="entry name" value="IONOTROPIC GLUTAMATE RECEPTOR"/>
    <property type="match status" value="1"/>
</dbReference>
<dbReference type="Pfam" id="PF01094">
    <property type="entry name" value="ANF_receptor"/>
    <property type="match status" value="1"/>
</dbReference>
<dbReference type="Pfam" id="PF00060">
    <property type="entry name" value="Lig_chan"/>
    <property type="match status" value="1"/>
</dbReference>
<dbReference type="Pfam" id="PF10613">
    <property type="entry name" value="Lig_chan-Glu_bd"/>
    <property type="match status" value="1"/>
</dbReference>
<dbReference type="Pfam" id="PF10565">
    <property type="entry name" value="NMDAR2_C"/>
    <property type="match status" value="1"/>
</dbReference>
<dbReference type="PRINTS" id="PR00177">
    <property type="entry name" value="NMDARECEPTOR"/>
</dbReference>
<dbReference type="SMART" id="SM00918">
    <property type="entry name" value="Lig_chan-Glu_bd"/>
    <property type="match status" value="1"/>
</dbReference>
<dbReference type="SMART" id="SM00079">
    <property type="entry name" value="PBPe"/>
    <property type="match status" value="1"/>
</dbReference>
<dbReference type="SUPFAM" id="SSF53822">
    <property type="entry name" value="Periplasmic binding protein-like I"/>
    <property type="match status" value="1"/>
</dbReference>
<dbReference type="SUPFAM" id="SSF53850">
    <property type="entry name" value="Periplasmic binding protein-like II"/>
    <property type="match status" value="1"/>
</dbReference>
<reference evidence="15" key="1">
    <citation type="journal article" date="2008" name="J. Mol. Biol.">
        <title>Apparent homomeric NR1 currents observed in Xenopus oocytes are caused by an endogenous NR2 subunit.</title>
        <authorList>
            <person name="Schmidt C."/>
            <person name="Hollmann M."/>
        </authorList>
    </citation>
    <scope>NUCLEOTIDE SEQUENCE [MRNA]</scope>
    <scope>FUNCTION</scope>
    <scope>TRANSPORTER ACTIVITY</scope>
    <scope>SUBCELLULAR LOCATION</scope>
    <scope>SUBUNIT</scope>
    <scope>TISSUE SPECIFICITY</scope>
    <source>
        <tissue evidence="11">Oocyte</tissue>
    </source>
</reference>
<reference evidence="16" key="2">
    <citation type="journal article" date="2016" name="Nature">
        <title>Genome evolution in the allotetraploid frog Xenopus laevis.</title>
        <authorList>
            <person name="Session A.M."/>
            <person name="Uno Y."/>
            <person name="Kwon T."/>
            <person name="Chapman J.A."/>
            <person name="Toyoda A."/>
            <person name="Takahashi S."/>
            <person name="Fukui A."/>
            <person name="Hikosaka A."/>
            <person name="Suzuki A."/>
            <person name="Kondo M."/>
            <person name="van Heeringen S.J."/>
            <person name="Quigley I."/>
            <person name="Heinz S."/>
            <person name="Ogino H."/>
            <person name="Ochi H."/>
            <person name="Hellsten U."/>
            <person name="Lyons J.B."/>
            <person name="Simakov O."/>
            <person name="Putnam N."/>
            <person name="Stites J."/>
            <person name="Kuroki Y."/>
            <person name="Tanaka T."/>
            <person name="Michiue T."/>
            <person name="Watanabe M."/>
            <person name="Bogdanovic O."/>
            <person name="Lister R."/>
            <person name="Georgiou G."/>
            <person name="Paranjpe S.S."/>
            <person name="van Kruijsbergen I."/>
            <person name="Shu S."/>
            <person name="Carlson J."/>
            <person name="Kinoshita T."/>
            <person name="Ohta Y."/>
            <person name="Mawaribuchi S."/>
            <person name="Jenkins J."/>
            <person name="Grimwood J."/>
            <person name="Schmutz J."/>
            <person name="Mitros T."/>
            <person name="Mozaffari S.V."/>
            <person name="Suzuki Y."/>
            <person name="Haramoto Y."/>
            <person name="Yamamoto T.S."/>
            <person name="Takagi C."/>
            <person name="Heald R."/>
            <person name="Miller K."/>
            <person name="Haudenschild C."/>
            <person name="Kitzman J."/>
            <person name="Nakayama T."/>
            <person name="Izutsu Y."/>
            <person name="Robert J."/>
            <person name="Fortriede J."/>
            <person name="Burns K."/>
            <person name="Lotay V."/>
            <person name="Karimi K."/>
            <person name="Yasuoka Y."/>
            <person name="Dichmann D.S."/>
            <person name="Flajnik M.F."/>
            <person name="Houston D.W."/>
            <person name="Shendure J."/>
            <person name="DuPasquier L."/>
            <person name="Vize P.D."/>
            <person name="Zorn A.M."/>
            <person name="Ito M."/>
            <person name="Marcotte E.M."/>
            <person name="Wallingford J.B."/>
            <person name="Ito Y."/>
            <person name="Asashima M."/>
            <person name="Ueno N."/>
            <person name="Matsuda Y."/>
            <person name="Veenstra G.J."/>
            <person name="Fujiyama A."/>
            <person name="Harland R.M."/>
            <person name="Taira M."/>
            <person name="Rokhsar D.S."/>
        </authorList>
    </citation>
    <scope>NUCLEOTIDE SEQUENCE [LARGE SCALE GENOMIC DNA]</scope>
    <source>
        <strain evidence="16">J</strain>
    </source>
</reference>
<reference evidence="17 18" key="3">
    <citation type="journal article" date="2014" name="Nature">
        <title>NMDA receptor structures reveal subunit arrangement and pore architecture.</title>
        <authorList>
            <person name="Lee C.H."/>
            <person name="Lu W."/>
            <person name="Michel J.C."/>
            <person name="Goehring A."/>
            <person name="Du J."/>
            <person name="Song X."/>
            <person name="Gouaux E."/>
        </authorList>
    </citation>
    <scope>X-RAY CRYSTALLOGRAPHY (3.59 ANGSTROMS) OF 20-839 IN COMPLEX WITH GRIN1 AND SYNTHETIC AGONIST</scope>
    <scope>FUNCTION</scope>
    <scope>TRANSPORTER ACTIVITY</scope>
    <scope>SUBUNIT</scope>
    <scope>SUBCELLULAR LOCATION</scope>
    <scope>TOPOLOGY</scope>
    <scope>DOMAIN</scope>
    <scope>GLYCOSYLATION AT ASN-336 AND ASN-685</scope>
    <scope>DISULFIDE BONDS</scope>
</reference>
<reference evidence="19 20 21" key="4">
    <citation type="journal article" date="2016" name="Cell">
        <title>Mechanism of NMDA Receptor Inhibition and Activation.</title>
        <authorList>
            <person name="Zhu S."/>
            <person name="Stein R.A."/>
            <person name="Yoshioka C."/>
            <person name="Lee C.H."/>
            <person name="Goehring A."/>
            <person name="Mchaourab H.S."/>
            <person name="Gouaux E."/>
        </authorList>
    </citation>
    <scope>STRUCTURE BY ELECTRON MICROSCOPY (7.00 ANGSTROMS) OF 1-839 IN COMPLEX WITH GRIN1 AND GLUTAMATE</scope>
    <scope>SUBUNIT</scope>
</reference>
<reference evidence="22 23" key="5">
    <citation type="journal article" date="2017" name="Science">
        <title>Cryo-EM structures of the triheteromeric NMDA receptor and its allosteric modulation.</title>
        <authorList>
            <person name="Lu W."/>
            <person name="Du J."/>
            <person name="Goehring A."/>
            <person name="Gouaux E."/>
        </authorList>
    </citation>
    <scope>STRUCTURE BY ELECTRON MICROSCOPY (4.50 ANGSTROMS) OF 1-840 IN COMPLEX WITH GRIN1 AND GRIN2A</scope>
    <scope>SUBCELLULAR LOCATION</scope>
    <scope>TOPOLOGY</scope>
    <scope>SUBUNIT</scope>
    <scope>FUNCTION</scope>
    <scope>DOMAIN</scope>
    <scope>GLYCOSYLATION AT ASN-336 AND ASN-685</scope>
    <scope>DISULFIDE BONDS</scope>
</reference>
<organism evidence="15">
    <name type="scientific">Xenopus laevis</name>
    <name type="common">African clawed frog</name>
    <dbReference type="NCBI Taxonomy" id="8355"/>
    <lineage>
        <taxon>Eukaryota</taxon>
        <taxon>Metazoa</taxon>
        <taxon>Chordata</taxon>
        <taxon>Craniata</taxon>
        <taxon>Vertebrata</taxon>
        <taxon>Euteleostomi</taxon>
        <taxon>Amphibia</taxon>
        <taxon>Batrachia</taxon>
        <taxon>Anura</taxon>
        <taxon>Pipoidea</taxon>
        <taxon>Pipidae</taxon>
        <taxon>Xenopodinae</taxon>
        <taxon>Xenopus</taxon>
        <taxon>Xenopus</taxon>
    </lineage>
</organism>
<accession>A7XY94</accession>